<name>DTD_LACLS</name>
<protein>
    <recommendedName>
        <fullName evidence="1">D-aminoacyl-tRNA deacylase</fullName>
        <shortName evidence="1">DTD</shortName>
        <ecNumber evidence="1">3.1.1.96</ecNumber>
    </recommendedName>
    <alternativeName>
        <fullName evidence="1">Gly-tRNA(Ala) deacylase</fullName>
    </alternativeName>
</protein>
<dbReference type="EC" id="3.1.1.96" evidence="1"/>
<dbReference type="EMBL" id="CP000425">
    <property type="protein sequence ID" value="ABJ71720.1"/>
    <property type="molecule type" value="Genomic_DNA"/>
</dbReference>
<dbReference type="RefSeq" id="WP_011675157.1">
    <property type="nucleotide sequence ID" value="NC_008527.1"/>
</dbReference>
<dbReference type="SMR" id="Q033A2"/>
<dbReference type="KEGG" id="llc:LACR_0094"/>
<dbReference type="HOGENOM" id="CLU_076901_1_0_9"/>
<dbReference type="Proteomes" id="UP000000240">
    <property type="component" value="Chromosome"/>
</dbReference>
<dbReference type="GO" id="GO:0005737">
    <property type="term" value="C:cytoplasm"/>
    <property type="evidence" value="ECO:0007669"/>
    <property type="project" value="UniProtKB-SubCell"/>
</dbReference>
<dbReference type="GO" id="GO:0051500">
    <property type="term" value="F:D-tyrosyl-tRNA(Tyr) deacylase activity"/>
    <property type="evidence" value="ECO:0007669"/>
    <property type="project" value="TreeGrafter"/>
</dbReference>
<dbReference type="GO" id="GO:0106026">
    <property type="term" value="F:Gly-tRNA(Ala) deacylase activity"/>
    <property type="evidence" value="ECO:0007669"/>
    <property type="project" value="UniProtKB-UniRule"/>
</dbReference>
<dbReference type="GO" id="GO:0043908">
    <property type="term" value="F:Ser(Gly)-tRNA(Ala) hydrolase activity"/>
    <property type="evidence" value="ECO:0007669"/>
    <property type="project" value="UniProtKB-UniRule"/>
</dbReference>
<dbReference type="GO" id="GO:0000049">
    <property type="term" value="F:tRNA binding"/>
    <property type="evidence" value="ECO:0007669"/>
    <property type="project" value="UniProtKB-UniRule"/>
</dbReference>
<dbReference type="GO" id="GO:0019478">
    <property type="term" value="P:D-amino acid catabolic process"/>
    <property type="evidence" value="ECO:0007669"/>
    <property type="project" value="UniProtKB-UniRule"/>
</dbReference>
<dbReference type="CDD" id="cd00563">
    <property type="entry name" value="Dtyr_deacylase"/>
    <property type="match status" value="1"/>
</dbReference>
<dbReference type="FunFam" id="3.50.80.10:FF:000001">
    <property type="entry name" value="D-aminoacyl-tRNA deacylase"/>
    <property type="match status" value="1"/>
</dbReference>
<dbReference type="Gene3D" id="3.50.80.10">
    <property type="entry name" value="D-tyrosyl-tRNA(Tyr) deacylase"/>
    <property type="match status" value="1"/>
</dbReference>
<dbReference type="HAMAP" id="MF_00518">
    <property type="entry name" value="Deacylase_Dtd"/>
    <property type="match status" value="1"/>
</dbReference>
<dbReference type="InterPro" id="IPR003732">
    <property type="entry name" value="Daa-tRNA_deacyls_DTD"/>
</dbReference>
<dbReference type="InterPro" id="IPR023509">
    <property type="entry name" value="DTD-like_sf"/>
</dbReference>
<dbReference type="NCBIfam" id="TIGR00256">
    <property type="entry name" value="D-aminoacyl-tRNA deacylase"/>
    <property type="match status" value="1"/>
</dbReference>
<dbReference type="PANTHER" id="PTHR10472:SF5">
    <property type="entry name" value="D-AMINOACYL-TRNA DEACYLASE 1"/>
    <property type="match status" value="1"/>
</dbReference>
<dbReference type="PANTHER" id="PTHR10472">
    <property type="entry name" value="D-TYROSYL-TRNA TYR DEACYLASE"/>
    <property type="match status" value="1"/>
</dbReference>
<dbReference type="Pfam" id="PF02580">
    <property type="entry name" value="Tyr_Deacylase"/>
    <property type="match status" value="1"/>
</dbReference>
<dbReference type="SUPFAM" id="SSF69500">
    <property type="entry name" value="DTD-like"/>
    <property type="match status" value="1"/>
</dbReference>
<proteinExistence type="inferred from homology"/>
<keyword id="KW-0963">Cytoplasm</keyword>
<keyword id="KW-0378">Hydrolase</keyword>
<keyword id="KW-0694">RNA-binding</keyword>
<keyword id="KW-0820">tRNA-binding</keyword>
<organism>
    <name type="scientific">Lactococcus lactis subsp. cremoris (strain SK11)</name>
    <dbReference type="NCBI Taxonomy" id="272622"/>
    <lineage>
        <taxon>Bacteria</taxon>
        <taxon>Bacillati</taxon>
        <taxon>Bacillota</taxon>
        <taxon>Bacilli</taxon>
        <taxon>Lactobacillales</taxon>
        <taxon>Streptococcaceae</taxon>
        <taxon>Lactococcus</taxon>
        <taxon>Lactococcus cremoris subsp. cremoris</taxon>
    </lineage>
</organism>
<reference key="1">
    <citation type="journal article" date="2006" name="Proc. Natl. Acad. Sci. U.S.A.">
        <title>Comparative genomics of the lactic acid bacteria.</title>
        <authorList>
            <person name="Makarova K.S."/>
            <person name="Slesarev A."/>
            <person name="Wolf Y.I."/>
            <person name="Sorokin A."/>
            <person name="Mirkin B."/>
            <person name="Koonin E.V."/>
            <person name="Pavlov A."/>
            <person name="Pavlova N."/>
            <person name="Karamychev V."/>
            <person name="Polouchine N."/>
            <person name="Shakhova V."/>
            <person name="Grigoriev I."/>
            <person name="Lou Y."/>
            <person name="Rohksar D."/>
            <person name="Lucas S."/>
            <person name="Huang K."/>
            <person name="Goodstein D.M."/>
            <person name="Hawkins T."/>
            <person name="Plengvidhya V."/>
            <person name="Welker D."/>
            <person name="Hughes J."/>
            <person name="Goh Y."/>
            <person name="Benson A."/>
            <person name="Baldwin K."/>
            <person name="Lee J.-H."/>
            <person name="Diaz-Muniz I."/>
            <person name="Dosti B."/>
            <person name="Smeianov V."/>
            <person name="Wechter W."/>
            <person name="Barabote R."/>
            <person name="Lorca G."/>
            <person name="Altermann E."/>
            <person name="Barrangou R."/>
            <person name="Ganesan B."/>
            <person name="Xie Y."/>
            <person name="Rawsthorne H."/>
            <person name="Tamir D."/>
            <person name="Parker C."/>
            <person name="Breidt F."/>
            <person name="Broadbent J.R."/>
            <person name="Hutkins R."/>
            <person name="O'Sullivan D."/>
            <person name="Steele J."/>
            <person name="Unlu G."/>
            <person name="Saier M.H. Jr."/>
            <person name="Klaenhammer T."/>
            <person name="Richardson P."/>
            <person name="Kozyavkin S."/>
            <person name="Weimer B.C."/>
            <person name="Mills D.A."/>
        </authorList>
    </citation>
    <scope>NUCLEOTIDE SEQUENCE [LARGE SCALE GENOMIC DNA]</scope>
    <source>
        <strain>SK11</strain>
    </source>
</reference>
<accession>Q033A2</accession>
<gene>
    <name evidence="1" type="primary">dtd</name>
    <name type="ordered locus">LACR_0094</name>
</gene>
<comment type="function">
    <text evidence="1">An aminoacyl-tRNA editing enzyme that deacylates mischarged D-aminoacyl-tRNAs. Also deacylates mischarged glycyl-tRNA(Ala), protecting cells against glycine mischarging by AlaRS. Acts via tRNA-based rather than protein-based catalysis; rejects L-amino acids rather than detecting D-amino acids in the active site. By recycling D-aminoacyl-tRNA to D-amino acids and free tRNA molecules, this enzyme counteracts the toxicity associated with the formation of D-aminoacyl-tRNA entities in vivo and helps enforce protein L-homochirality.</text>
</comment>
<comment type="catalytic activity">
    <reaction evidence="1">
        <text>glycyl-tRNA(Ala) + H2O = tRNA(Ala) + glycine + H(+)</text>
        <dbReference type="Rhea" id="RHEA:53744"/>
        <dbReference type="Rhea" id="RHEA-COMP:9657"/>
        <dbReference type="Rhea" id="RHEA-COMP:13640"/>
        <dbReference type="ChEBI" id="CHEBI:15377"/>
        <dbReference type="ChEBI" id="CHEBI:15378"/>
        <dbReference type="ChEBI" id="CHEBI:57305"/>
        <dbReference type="ChEBI" id="CHEBI:78442"/>
        <dbReference type="ChEBI" id="CHEBI:78522"/>
        <dbReference type="EC" id="3.1.1.96"/>
    </reaction>
</comment>
<comment type="catalytic activity">
    <reaction evidence="1">
        <text>a D-aminoacyl-tRNA + H2O = a tRNA + a D-alpha-amino acid + H(+)</text>
        <dbReference type="Rhea" id="RHEA:13953"/>
        <dbReference type="Rhea" id="RHEA-COMP:10123"/>
        <dbReference type="Rhea" id="RHEA-COMP:10124"/>
        <dbReference type="ChEBI" id="CHEBI:15377"/>
        <dbReference type="ChEBI" id="CHEBI:15378"/>
        <dbReference type="ChEBI" id="CHEBI:59871"/>
        <dbReference type="ChEBI" id="CHEBI:78442"/>
        <dbReference type="ChEBI" id="CHEBI:79333"/>
        <dbReference type="EC" id="3.1.1.96"/>
    </reaction>
</comment>
<comment type="subunit">
    <text evidence="1">Homodimer.</text>
</comment>
<comment type="subcellular location">
    <subcellularLocation>
        <location evidence="1">Cytoplasm</location>
    </subcellularLocation>
</comment>
<comment type="domain">
    <text evidence="1">A Gly-cisPro motif from one monomer fits into the active site of the other monomer to allow specific chiral rejection of L-amino acids.</text>
</comment>
<comment type="similarity">
    <text evidence="1">Belongs to the DTD family.</text>
</comment>
<sequence length="151" mass="16715">MKIVIQRVKSASVSIDGKIKEKINQGFLLFVGVEDADSNFDLDYAVRKIAQMRIFSDEADKMNLSVQDIQGEILSISQFTLYAETKKGNRPSFSAAGKPYFAKAMYEKFNDSLAQIVPVKAGVFGADMQVELINDGPVTIILDTKEARKNA</sequence>
<evidence type="ECO:0000255" key="1">
    <source>
        <dbReference type="HAMAP-Rule" id="MF_00518"/>
    </source>
</evidence>
<feature type="chain" id="PRO_1000050847" description="D-aminoacyl-tRNA deacylase">
    <location>
        <begin position="1"/>
        <end position="151"/>
    </location>
</feature>
<feature type="short sequence motif" description="Gly-cisPro motif, important for rejection of L-amino acids" evidence="1">
    <location>
        <begin position="136"/>
        <end position="137"/>
    </location>
</feature>